<organism>
    <name type="scientific">Macaca mulatta</name>
    <name type="common">Rhesus macaque</name>
    <dbReference type="NCBI Taxonomy" id="9544"/>
    <lineage>
        <taxon>Eukaryota</taxon>
        <taxon>Metazoa</taxon>
        <taxon>Chordata</taxon>
        <taxon>Craniata</taxon>
        <taxon>Vertebrata</taxon>
        <taxon>Euteleostomi</taxon>
        <taxon>Mammalia</taxon>
        <taxon>Eutheria</taxon>
        <taxon>Euarchontoglires</taxon>
        <taxon>Primates</taxon>
        <taxon>Haplorrhini</taxon>
        <taxon>Catarrhini</taxon>
        <taxon>Cercopithecidae</taxon>
        <taxon>Cercopithecinae</taxon>
        <taxon>Macaca</taxon>
    </lineage>
</organism>
<protein>
    <recommendedName>
        <fullName evidence="2">Very long chain fatty acid elongase 4</fullName>
        <ecNumber evidence="2">2.3.1.199</ecNumber>
    </recommendedName>
    <alternativeName>
        <fullName evidence="2">3-keto acyl-CoA synthase ELOVL4</fullName>
    </alternativeName>
    <alternativeName>
        <fullName evidence="2">ELOVL fatty acid elongase 4</fullName>
        <shortName evidence="2">ELOVL FA elongase 4</shortName>
    </alternativeName>
    <alternativeName>
        <fullName evidence="2">Elongation of very long chain fatty acids protein 4</fullName>
    </alternativeName>
    <alternativeName>
        <fullName evidence="2">Very long chain 3-ketoacyl-CoA synthase 4</fullName>
    </alternativeName>
    <alternativeName>
        <fullName evidence="2">Very long chain 3-oxoacyl-CoA synthase 4</fullName>
    </alternativeName>
</protein>
<proteinExistence type="inferred from homology"/>
<name>ELOV4_MACMU</name>
<feature type="chain" id="PRO_0000207544" description="Very long chain fatty acid elongase 4">
    <location>
        <begin position="1"/>
        <end position="314"/>
    </location>
</feature>
<feature type="transmembrane region" description="Helical" evidence="2">
    <location>
        <begin position="42"/>
        <end position="62"/>
    </location>
</feature>
<feature type="transmembrane region" description="Helical" evidence="2">
    <location>
        <begin position="78"/>
        <end position="98"/>
    </location>
</feature>
<feature type="transmembrane region" description="Helical" evidence="2">
    <location>
        <begin position="127"/>
        <end position="147"/>
    </location>
</feature>
<feature type="transmembrane region" description="Helical" evidence="2">
    <location>
        <begin position="165"/>
        <end position="185"/>
    </location>
</feature>
<feature type="transmembrane region" description="Helical" evidence="2">
    <location>
        <begin position="188"/>
        <end position="208"/>
    </location>
</feature>
<feature type="transmembrane region" description="Helical" evidence="2">
    <location>
        <begin position="217"/>
        <end position="237"/>
    </location>
</feature>
<feature type="transmembrane region" description="Helical" evidence="2">
    <location>
        <begin position="247"/>
        <end position="267"/>
    </location>
</feature>
<feature type="region of interest" description="Disordered" evidence="3">
    <location>
        <begin position="274"/>
        <end position="314"/>
    </location>
</feature>
<feature type="short sequence motif" description="Di-lysine motif" evidence="2">
    <location>
        <begin position="310"/>
        <end position="314"/>
    </location>
</feature>
<feature type="compositionally biased region" description="Basic and acidic residues" evidence="3">
    <location>
        <begin position="293"/>
        <end position="304"/>
    </location>
</feature>
<feature type="compositionally biased region" description="Basic residues" evidence="3">
    <location>
        <begin position="305"/>
        <end position="314"/>
    </location>
</feature>
<feature type="glycosylation site" description="N-linked (GlcNAc...) asparagine" evidence="2">
    <location>
        <position position="20"/>
    </location>
</feature>
<dbReference type="EC" id="2.3.1.199" evidence="2"/>
<dbReference type="EMBL" id="DQ147007">
    <property type="protein sequence ID" value="AAZ95094.1"/>
    <property type="molecule type" value="Genomic_DNA"/>
</dbReference>
<dbReference type="EMBL" id="DQ147002">
    <property type="protein sequence ID" value="AAZ95094.1"/>
    <property type="status" value="JOINED"/>
    <property type="molecule type" value="Genomic_DNA"/>
</dbReference>
<dbReference type="EMBL" id="DQ147003">
    <property type="protein sequence ID" value="AAZ95094.1"/>
    <property type="status" value="JOINED"/>
    <property type="molecule type" value="Genomic_DNA"/>
</dbReference>
<dbReference type="EMBL" id="DQ147004">
    <property type="protein sequence ID" value="AAZ95094.1"/>
    <property type="status" value="JOINED"/>
    <property type="molecule type" value="Genomic_DNA"/>
</dbReference>
<dbReference type="EMBL" id="DQ147005">
    <property type="protein sequence ID" value="AAZ95094.1"/>
    <property type="status" value="JOINED"/>
    <property type="molecule type" value="Genomic_DNA"/>
</dbReference>
<dbReference type="EMBL" id="DQ147006">
    <property type="protein sequence ID" value="AAZ95094.1"/>
    <property type="status" value="JOINED"/>
    <property type="molecule type" value="Genomic_DNA"/>
</dbReference>
<dbReference type="RefSeq" id="NP_001035509.1">
    <property type="nucleotide sequence ID" value="NM_001040419.3"/>
</dbReference>
<dbReference type="SMR" id="Q3S8M4"/>
<dbReference type="FunCoup" id="Q3S8M4">
    <property type="interactions" value="836"/>
</dbReference>
<dbReference type="STRING" id="9544.ENSMMUP00000041938"/>
<dbReference type="GlyCosmos" id="Q3S8M4">
    <property type="glycosylation" value="1 site, No reported glycans"/>
</dbReference>
<dbReference type="PaxDb" id="9544-ENSMMUP00000026603"/>
<dbReference type="Ensembl" id="ENSMMUT00000028429.4">
    <property type="protein sequence ID" value="ENSMMUP00000026603.2"/>
    <property type="gene ID" value="ENSMMUG00000020208.4"/>
</dbReference>
<dbReference type="Ensembl" id="ENSMMUT00000104786.1">
    <property type="protein sequence ID" value="ENSMMUP00000076993.1"/>
    <property type="gene ID" value="ENSMMUG00000020208.4"/>
</dbReference>
<dbReference type="GeneID" id="692070"/>
<dbReference type="KEGG" id="mcc:692070"/>
<dbReference type="CTD" id="6785"/>
<dbReference type="VEuPathDB" id="HostDB:ENSMMUG00000020208"/>
<dbReference type="VGNC" id="VGNC:72044">
    <property type="gene designation" value="ELOVL4"/>
</dbReference>
<dbReference type="eggNOG" id="KOG3071">
    <property type="taxonomic scope" value="Eukaryota"/>
</dbReference>
<dbReference type="GeneTree" id="ENSGT01050000244838"/>
<dbReference type="HOGENOM" id="CLU_048483_0_1_1"/>
<dbReference type="InParanoid" id="Q3S8M4"/>
<dbReference type="OMA" id="WTYFTST"/>
<dbReference type="OrthoDB" id="434092at2759"/>
<dbReference type="TreeFam" id="TF323454"/>
<dbReference type="UniPathway" id="UPA00094"/>
<dbReference type="Proteomes" id="UP000006718">
    <property type="component" value="Chromosome 4"/>
</dbReference>
<dbReference type="Bgee" id="ENSMMUG00000020208">
    <property type="expression patterns" value="Expressed in dorsolateral prefrontal cortex and 14 other cell types or tissues"/>
</dbReference>
<dbReference type="ExpressionAtlas" id="Q3S8M4">
    <property type="expression patterns" value="baseline"/>
</dbReference>
<dbReference type="GO" id="GO:0005783">
    <property type="term" value="C:endoplasmic reticulum"/>
    <property type="evidence" value="ECO:0000250"/>
    <property type="project" value="UniProtKB"/>
</dbReference>
<dbReference type="GO" id="GO:0005789">
    <property type="term" value="C:endoplasmic reticulum membrane"/>
    <property type="evidence" value="ECO:0000250"/>
    <property type="project" value="UniProtKB"/>
</dbReference>
<dbReference type="GO" id="GO:0009922">
    <property type="term" value="F:fatty acid elongase activity"/>
    <property type="evidence" value="ECO:0000250"/>
    <property type="project" value="UniProtKB"/>
</dbReference>
<dbReference type="GO" id="GO:0034625">
    <property type="term" value="P:fatty acid elongation, monounsaturated fatty acid"/>
    <property type="evidence" value="ECO:0000318"/>
    <property type="project" value="GO_Central"/>
</dbReference>
<dbReference type="GO" id="GO:0034626">
    <property type="term" value="P:fatty acid elongation, polyunsaturated fatty acid"/>
    <property type="evidence" value="ECO:0000250"/>
    <property type="project" value="UniProtKB"/>
</dbReference>
<dbReference type="GO" id="GO:0019367">
    <property type="term" value="P:fatty acid elongation, saturated fatty acid"/>
    <property type="evidence" value="ECO:0000250"/>
    <property type="project" value="UniProtKB"/>
</dbReference>
<dbReference type="GO" id="GO:0035338">
    <property type="term" value="P:long-chain fatty-acyl-CoA biosynthetic process"/>
    <property type="evidence" value="ECO:0007669"/>
    <property type="project" value="UniProtKB-UniRule"/>
</dbReference>
<dbReference type="GO" id="GO:0030148">
    <property type="term" value="P:sphingolipid biosynthetic process"/>
    <property type="evidence" value="ECO:0000318"/>
    <property type="project" value="GO_Central"/>
</dbReference>
<dbReference type="GO" id="GO:0006636">
    <property type="term" value="P:unsaturated fatty acid biosynthetic process"/>
    <property type="evidence" value="ECO:0007669"/>
    <property type="project" value="UniProtKB-UniRule"/>
</dbReference>
<dbReference type="GO" id="GO:0042761">
    <property type="term" value="P:very long-chain fatty acid biosynthetic process"/>
    <property type="evidence" value="ECO:0000250"/>
    <property type="project" value="UniProtKB"/>
</dbReference>
<dbReference type="HAMAP" id="MF_03204">
    <property type="entry name" value="VLCF_elongase_4"/>
    <property type="match status" value="1"/>
</dbReference>
<dbReference type="InterPro" id="IPR030457">
    <property type="entry name" value="ELO_CS"/>
</dbReference>
<dbReference type="InterPro" id="IPR002076">
    <property type="entry name" value="ELO_fam"/>
</dbReference>
<dbReference type="InterPro" id="IPR033678">
    <property type="entry name" value="ELOVL4"/>
</dbReference>
<dbReference type="PANTHER" id="PTHR11157:SF12">
    <property type="entry name" value="ELONGATION OF VERY LONG CHAIN FATTY ACIDS PROTEIN 4"/>
    <property type="match status" value="1"/>
</dbReference>
<dbReference type="PANTHER" id="PTHR11157">
    <property type="entry name" value="FATTY ACID ACYL TRANSFERASE-RELATED"/>
    <property type="match status" value="1"/>
</dbReference>
<dbReference type="Pfam" id="PF01151">
    <property type="entry name" value="ELO"/>
    <property type="match status" value="1"/>
</dbReference>
<dbReference type="PROSITE" id="PS01188">
    <property type="entry name" value="ELO"/>
    <property type="match status" value="1"/>
</dbReference>
<keyword id="KW-0256">Endoplasmic reticulum</keyword>
<keyword id="KW-0275">Fatty acid biosynthesis</keyword>
<keyword id="KW-0276">Fatty acid metabolism</keyword>
<keyword id="KW-0325">Glycoprotein</keyword>
<keyword id="KW-0444">Lipid biosynthesis</keyword>
<keyword id="KW-0443">Lipid metabolism</keyword>
<keyword id="KW-0472">Membrane</keyword>
<keyword id="KW-1185">Reference proteome</keyword>
<keyword id="KW-0808">Transferase</keyword>
<keyword id="KW-0812">Transmembrane</keyword>
<keyword id="KW-1133">Transmembrane helix</keyword>
<gene>
    <name evidence="2" type="primary">ELOVL4</name>
</gene>
<sequence>MGLLDSEPGSVLNVVSTALNDTVEFYRWTWSIADKRVENWPLMQSPWPTLSISTLYLLFVWLGPKWMKDREPFQMRLVLIIYNFGMVLLNFFIFRELFMGSYNAGYSYICQSVDYSNNVNEVRIAAALWWYFVSKGVEYLDTVFFILRKKNNQVSFLHVYHHCTMFTLWWIGIKWVAGGQAFFGAQMNSFIHVIMYSYYGLAAFGPWIQKYLWWKRYLTMLQLVQFHVTIGHTALSLYTDCPFPKWMHWALIAYAISFIFLFLNFYIRTYKEPKKPKTGKTAMNGISANGVSKSEKQLVIENGKKQKNGKAKGD</sequence>
<comment type="function">
    <text evidence="2">Catalyzes the first and rate-limiting reaction of the four reactions that constitute the long-chain fatty acids elongation cycle. This endoplasmic reticulum-bound enzymatic process allows the addition of 2 carbons to the chain of long- and very long-chain fatty acids (VLCFAs) per cycle. Condensing enzyme that catalyzes the synthesis of very long chain saturated (VLC-SFA) and polyunsaturated (PUFA) fatty acids that are involved in multiple biological processes as precursors of membrane lipids and lipid mediators. May play a critical role in early brain and skin development.</text>
</comment>
<comment type="catalytic activity">
    <reaction evidence="2">
        <text>a very-long-chain acyl-CoA + malonyl-CoA + H(+) = a very-long-chain 3-oxoacyl-CoA + CO2 + CoA</text>
        <dbReference type="Rhea" id="RHEA:32727"/>
        <dbReference type="ChEBI" id="CHEBI:15378"/>
        <dbReference type="ChEBI" id="CHEBI:16526"/>
        <dbReference type="ChEBI" id="CHEBI:57287"/>
        <dbReference type="ChEBI" id="CHEBI:57384"/>
        <dbReference type="ChEBI" id="CHEBI:90725"/>
        <dbReference type="ChEBI" id="CHEBI:90736"/>
        <dbReference type="EC" id="2.3.1.199"/>
    </reaction>
    <physiologicalReaction direction="left-to-right" evidence="1">
        <dbReference type="Rhea" id="RHEA:32728"/>
    </physiologicalReaction>
</comment>
<comment type="catalytic activity">
    <reaction evidence="1">
        <text>hexacosanoyl-CoA + malonyl-CoA + H(+) = 3-oxooctacosanyol-CoA + CO2 + CoA</text>
        <dbReference type="Rhea" id="RHEA:36519"/>
        <dbReference type="ChEBI" id="CHEBI:15378"/>
        <dbReference type="ChEBI" id="CHEBI:16526"/>
        <dbReference type="ChEBI" id="CHEBI:57287"/>
        <dbReference type="ChEBI" id="CHEBI:57384"/>
        <dbReference type="ChEBI" id="CHEBI:64868"/>
        <dbReference type="ChEBI" id="CHEBI:73976"/>
    </reaction>
    <physiologicalReaction direction="left-to-right" evidence="1">
        <dbReference type="Rhea" id="RHEA:36520"/>
    </physiologicalReaction>
</comment>
<comment type="catalytic activity">
    <reaction evidence="1">
        <text>octacosanoyl-CoA + malonyl-CoA + H(+) = 3-oxo-triacontanoyl-CoA + CO2 + CoA</text>
        <dbReference type="Rhea" id="RHEA:36807"/>
        <dbReference type="ChEBI" id="CHEBI:15378"/>
        <dbReference type="ChEBI" id="CHEBI:16526"/>
        <dbReference type="ChEBI" id="CHEBI:57287"/>
        <dbReference type="ChEBI" id="CHEBI:57384"/>
        <dbReference type="ChEBI" id="CHEBI:74141"/>
        <dbReference type="ChEBI" id="CHEBI:74228"/>
    </reaction>
    <physiologicalReaction direction="left-to-right" evidence="1">
        <dbReference type="Rhea" id="RHEA:36808"/>
    </physiologicalReaction>
</comment>
<comment type="catalytic activity">
    <reaction evidence="1">
        <text>triacontanoyl-CoA + malonyl-CoA + H(+) = 3-oxo-dotriacontanoyl-CoA + CO2 + CoA</text>
        <dbReference type="Rhea" id="RHEA:43852"/>
        <dbReference type="ChEBI" id="CHEBI:15378"/>
        <dbReference type="ChEBI" id="CHEBI:16526"/>
        <dbReference type="ChEBI" id="CHEBI:57287"/>
        <dbReference type="ChEBI" id="CHEBI:57384"/>
        <dbReference type="ChEBI" id="CHEBI:76386"/>
        <dbReference type="ChEBI" id="CHEBI:83795"/>
    </reaction>
    <physiologicalReaction direction="left-to-right" evidence="1">
        <dbReference type="Rhea" id="RHEA:43853"/>
    </physiologicalReaction>
</comment>
<comment type="catalytic activity">
    <reaction evidence="1">
        <text>(19Z,22Z,25Z,28Z,31Z)-tetratriacontapentaenoyl-CoA + malonyl-CoA + H(+) = 3-oxo-(21Z,24Z,27Z,30Z,33Z)-hexatriacontapentaenoyl-CoA + CO2 + CoA</text>
        <dbReference type="Rhea" id="RHEA:36871"/>
        <dbReference type="ChEBI" id="CHEBI:15378"/>
        <dbReference type="ChEBI" id="CHEBI:16526"/>
        <dbReference type="ChEBI" id="CHEBI:57287"/>
        <dbReference type="ChEBI" id="CHEBI:57384"/>
        <dbReference type="ChEBI" id="CHEBI:74260"/>
        <dbReference type="ChEBI" id="CHEBI:74261"/>
    </reaction>
    <physiologicalReaction direction="left-to-right" evidence="1">
        <dbReference type="Rhea" id="RHEA:36872"/>
    </physiologicalReaction>
</comment>
<comment type="catalytic activity">
    <reaction evidence="1">
        <text>(4Z,7Z,10Z,13Z,16Z,19Z)-docosahexaenoyl-CoA + malonyl-CoA + H(+) = 3-oxo-(6Z,9Z,12Z,15Z,18Z,21Z)-tetracosahexaenoyl-CoA + CO2 + CoA</text>
        <dbReference type="Rhea" id="RHEA:36943"/>
        <dbReference type="ChEBI" id="CHEBI:15378"/>
        <dbReference type="ChEBI" id="CHEBI:16526"/>
        <dbReference type="ChEBI" id="CHEBI:57287"/>
        <dbReference type="ChEBI" id="CHEBI:57384"/>
        <dbReference type="ChEBI" id="CHEBI:74298"/>
        <dbReference type="ChEBI" id="CHEBI:74304"/>
    </reaction>
    <physiologicalReaction direction="left-to-right" evidence="1">
        <dbReference type="Rhea" id="RHEA:36944"/>
    </physiologicalReaction>
</comment>
<comment type="catalytic activity">
    <reaction evidence="1">
        <text>(7Z,10Z,13Z,16Z)-docosatetraenoyl-CoA + malonyl-CoA + H(+) = (9Z,12Z,15Z,18Z)-3-oxotetracosatetraenoyl-CoA + CO2 + CoA</text>
        <dbReference type="Rhea" id="RHEA:36479"/>
        <dbReference type="ChEBI" id="CHEBI:15378"/>
        <dbReference type="ChEBI" id="CHEBI:16526"/>
        <dbReference type="ChEBI" id="CHEBI:57287"/>
        <dbReference type="ChEBI" id="CHEBI:57384"/>
        <dbReference type="ChEBI" id="CHEBI:73856"/>
        <dbReference type="ChEBI" id="CHEBI:73857"/>
    </reaction>
    <physiologicalReaction direction="left-to-right" evidence="1">
        <dbReference type="Rhea" id="RHEA:36480"/>
    </physiologicalReaction>
</comment>
<comment type="catalytic activity">
    <reaction evidence="1">
        <text>(11Z,14Z,17Z,20Z,23Z)-hexacosapentaenoyl-CoA + malonyl-CoA + H(+) = 3-oxo-(13Z,16Z,19Z,22Z,25Z)-octacosapentaenoyl-CoA + CO2 + CoA</text>
        <dbReference type="Rhea" id="RHEA:36819"/>
        <dbReference type="ChEBI" id="CHEBI:15378"/>
        <dbReference type="ChEBI" id="CHEBI:16526"/>
        <dbReference type="ChEBI" id="CHEBI:57287"/>
        <dbReference type="ChEBI" id="CHEBI:57384"/>
        <dbReference type="ChEBI" id="CHEBI:74229"/>
        <dbReference type="ChEBI" id="CHEBI:74230"/>
    </reaction>
    <physiologicalReaction direction="left-to-right" evidence="1">
        <dbReference type="Rhea" id="RHEA:36820"/>
    </physiologicalReaction>
</comment>
<comment type="catalytic activity">
    <reaction evidence="1">
        <text>(13Z,16Z,19Z,22Z,25Z)-octacosapentaenoyl-CoA + malonyl-CoA + H(+) = 3-oxo-(15Z,18Z,21Z,24Z,27Z)-triacontapentaenoyl-CoA + CO2 + CoA</text>
        <dbReference type="Rhea" id="RHEA:36843"/>
        <dbReference type="ChEBI" id="CHEBI:15378"/>
        <dbReference type="ChEBI" id="CHEBI:16526"/>
        <dbReference type="ChEBI" id="CHEBI:57287"/>
        <dbReference type="ChEBI" id="CHEBI:57384"/>
        <dbReference type="ChEBI" id="CHEBI:74233"/>
        <dbReference type="ChEBI" id="CHEBI:74246"/>
    </reaction>
    <physiologicalReaction direction="left-to-right" evidence="1">
        <dbReference type="Rhea" id="RHEA:36844"/>
    </physiologicalReaction>
</comment>
<comment type="catalytic activity">
    <reaction evidence="1">
        <text>(15Z,18Z,21Z,24Z,27Z)-triacontapentaenoyl-CoA + malonyl-CoA + H(+) = 3-oxo-(17Z,20Z,23Z,26Z,29Z)-dotriacontapentaenoyl-CoA + CO2 + CoA</text>
        <dbReference type="Rhea" id="RHEA:36851"/>
        <dbReference type="ChEBI" id="CHEBI:15378"/>
        <dbReference type="ChEBI" id="CHEBI:16526"/>
        <dbReference type="ChEBI" id="CHEBI:57287"/>
        <dbReference type="ChEBI" id="CHEBI:57384"/>
        <dbReference type="ChEBI" id="CHEBI:74247"/>
        <dbReference type="ChEBI" id="CHEBI:74254"/>
    </reaction>
    <physiologicalReaction direction="left-to-right" evidence="1">
        <dbReference type="Rhea" id="RHEA:36852"/>
    </physiologicalReaction>
</comment>
<comment type="catalytic activity">
    <reaction evidence="1">
        <text>(17Z,20Z,23Z,26Z,29Z)-dotriacontapentaenoyl-CoA + malonyl-CoA + H(+) = 3-oxo-(19Z,22Z,25Z,28Z,31Z)-tetratriacontapentaenoyl-CoA + CO2 + CoA</text>
        <dbReference type="Rhea" id="RHEA:36859"/>
        <dbReference type="ChEBI" id="CHEBI:15378"/>
        <dbReference type="ChEBI" id="CHEBI:16526"/>
        <dbReference type="ChEBI" id="CHEBI:57287"/>
        <dbReference type="ChEBI" id="CHEBI:57384"/>
        <dbReference type="ChEBI" id="CHEBI:74249"/>
        <dbReference type="ChEBI" id="CHEBI:74259"/>
    </reaction>
    <physiologicalReaction direction="left-to-right" evidence="1">
        <dbReference type="Rhea" id="RHEA:36860"/>
    </physiologicalReaction>
</comment>
<comment type="catalytic activity">
    <reaction evidence="1">
        <text>(21Z,24Z,27Z,30Z,33Z)-hexatriacontapentaenoyl-CoA + malonyl-CoA + H(+) = 3-oxo-(23Z,26Z,29Z,32Z,35Z)-octatriacontapentaenoyl-CoA + CO2 + CoA</text>
        <dbReference type="Rhea" id="RHEA:36875"/>
        <dbReference type="ChEBI" id="CHEBI:15378"/>
        <dbReference type="ChEBI" id="CHEBI:16526"/>
        <dbReference type="ChEBI" id="CHEBI:57287"/>
        <dbReference type="ChEBI" id="CHEBI:57384"/>
        <dbReference type="ChEBI" id="CHEBI:74262"/>
        <dbReference type="ChEBI" id="CHEBI:74263"/>
    </reaction>
    <physiologicalReaction direction="left-to-right" evidence="1">
        <dbReference type="Rhea" id="RHEA:36876"/>
    </physiologicalReaction>
</comment>
<comment type="catalytic activity">
    <reaction evidence="1">
        <text>(11Z,14Z,17Z,20Z)-hexacosatetraenoyl-CoA + malonyl-CoA + H(+) = (13Z,16Z,19Z,22Z)-3-oxooctacosatetraenoyl-CoA + CO2 + CoA</text>
        <dbReference type="Rhea" id="RHEA:36907"/>
        <dbReference type="ChEBI" id="CHEBI:15378"/>
        <dbReference type="ChEBI" id="CHEBI:16526"/>
        <dbReference type="ChEBI" id="CHEBI:57287"/>
        <dbReference type="ChEBI" id="CHEBI:57384"/>
        <dbReference type="ChEBI" id="CHEBI:74282"/>
        <dbReference type="ChEBI" id="CHEBI:74283"/>
    </reaction>
    <physiologicalReaction direction="left-to-right" evidence="1">
        <dbReference type="Rhea" id="RHEA:36908"/>
    </physiologicalReaction>
</comment>
<comment type="catalytic activity">
    <reaction evidence="1">
        <text>(13Z,16Z,19Z,22Z)-octacosatetraenoyl-CoA + malonyl-CoA + H(+) = 3-oxo-(15Z,18Z,21Z,24Z)-triacontatetraenoyl-CoA + CO2 + CoA</text>
        <dbReference type="Rhea" id="RHEA:36911"/>
        <dbReference type="ChEBI" id="CHEBI:15378"/>
        <dbReference type="ChEBI" id="CHEBI:16526"/>
        <dbReference type="ChEBI" id="CHEBI:57287"/>
        <dbReference type="ChEBI" id="CHEBI:57384"/>
        <dbReference type="ChEBI" id="CHEBI:74285"/>
        <dbReference type="ChEBI" id="CHEBI:74286"/>
    </reaction>
    <physiologicalReaction direction="left-to-right" evidence="1">
        <dbReference type="Rhea" id="RHEA:36912"/>
    </physiologicalReaction>
</comment>
<comment type="catalytic activity">
    <reaction evidence="1">
        <text>(15Z,18Z,21Z,24Z)-triacontatetraenoyl-CoA + malonyl-CoA + H(+) = 3-oxo-(17Z,20Z,23Z,26Z)-dotriacontatetraenoyl-CoA + CO2 + CoA</text>
        <dbReference type="Rhea" id="RHEA:36915"/>
        <dbReference type="ChEBI" id="CHEBI:15378"/>
        <dbReference type="ChEBI" id="CHEBI:16526"/>
        <dbReference type="ChEBI" id="CHEBI:57287"/>
        <dbReference type="ChEBI" id="CHEBI:57384"/>
        <dbReference type="ChEBI" id="CHEBI:74287"/>
        <dbReference type="ChEBI" id="CHEBI:74288"/>
    </reaction>
    <physiologicalReaction direction="left-to-right" evidence="1">
        <dbReference type="Rhea" id="RHEA:36916"/>
    </physiologicalReaction>
</comment>
<comment type="catalytic activity">
    <reaction evidence="1">
        <text>(17Z,20Z,23Z,26Z)-dotriacontatetraenoyl-CoA + malonyl-CoA + H(+) = 3-oxo-(19Z,22Z,25Z,28Z)-tetratriacontatetraenoyl-CoA + CO2 + CoA</text>
        <dbReference type="Rhea" id="RHEA:36919"/>
        <dbReference type="ChEBI" id="CHEBI:15378"/>
        <dbReference type="ChEBI" id="CHEBI:16526"/>
        <dbReference type="ChEBI" id="CHEBI:57287"/>
        <dbReference type="ChEBI" id="CHEBI:57384"/>
        <dbReference type="ChEBI" id="CHEBI:74289"/>
        <dbReference type="ChEBI" id="CHEBI:74290"/>
    </reaction>
    <physiologicalReaction direction="left-to-right" evidence="1">
        <dbReference type="Rhea" id="RHEA:36920"/>
    </physiologicalReaction>
</comment>
<comment type="catalytic activity">
    <reaction evidence="1">
        <text>(19Z,22Z,25Z,28Z)-tetratriacontatetraenoyl-CoA + malonyl-CoA + H(+) = 3-oxo-(21Z,24Z,27Z,30Z)-hexatriacontatetraenoyl-CoA + CO2 + CoA</text>
        <dbReference type="Rhea" id="RHEA:36923"/>
        <dbReference type="ChEBI" id="CHEBI:15378"/>
        <dbReference type="ChEBI" id="CHEBI:16526"/>
        <dbReference type="ChEBI" id="CHEBI:57287"/>
        <dbReference type="ChEBI" id="CHEBI:57384"/>
        <dbReference type="ChEBI" id="CHEBI:74291"/>
        <dbReference type="ChEBI" id="CHEBI:74292"/>
    </reaction>
    <physiologicalReaction direction="left-to-right" evidence="1">
        <dbReference type="Rhea" id="RHEA:36924"/>
    </physiologicalReaction>
</comment>
<comment type="catalytic activity">
    <reaction evidence="1">
        <text>(21Z,24Z,27Z,30Z)-hexatriacontatetraenoyl-CoA + malonyl-CoA + H(+) = 3-oxo-(23Z,26Z,29Z,32Z)-octatriacontatetraenoyl-CoA + CO2 + CoA</text>
        <dbReference type="Rhea" id="RHEA:36927"/>
        <dbReference type="ChEBI" id="CHEBI:15378"/>
        <dbReference type="ChEBI" id="CHEBI:16526"/>
        <dbReference type="ChEBI" id="CHEBI:57287"/>
        <dbReference type="ChEBI" id="CHEBI:57384"/>
        <dbReference type="ChEBI" id="CHEBI:74293"/>
        <dbReference type="ChEBI" id="CHEBI:74294"/>
    </reaction>
    <physiologicalReaction direction="left-to-right" evidence="1">
        <dbReference type="Rhea" id="RHEA:36928"/>
    </physiologicalReaction>
</comment>
<comment type="catalytic activity">
    <reaction evidence="1">
        <text>(6Z,9Z,12Z,15Z,18Z,21Z)-tetracosahexaenoyl-CoA + malonyl-CoA + H(+) = 3-oxo-(8Z,11Z,14Z,17Z,20Z,23Z)-hexacosahexaenoyl-CoA + CO2 + CoA</text>
        <dbReference type="Rhea" id="RHEA:36947"/>
        <dbReference type="ChEBI" id="CHEBI:15378"/>
        <dbReference type="ChEBI" id="CHEBI:16526"/>
        <dbReference type="ChEBI" id="CHEBI:57287"/>
        <dbReference type="ChEBI" id="CHEBI:57384"/>
        <dbReference type="ChEBI" id="CHEBI:74086"/>
        <dbReference type="ChEBI" id="CHEBI:74305"/>
    </reaction>
    <physiologicalReaction direction="left-to-right" evidence="1">
        <dbReference type="Rhea" id="RHEA:36948"/>
    </physiologicalReaction>
</comment>
<comment type="catalytic activity">
    <reaction evidence="1">
        <text>(8Z,11Z,14Z,17Z,20Z,23Z)-hexacosahexaenoyl-CoA + malonyl-CoA + H(+) = 3-oxo-(10Z,13Z,16Z,19Z,22Z,25Z)-octacosahexaenoyl-CoA + CO2 + CoA</text>
        <dbReference type="Rhea" id="RHEA:36963"/>
        <dbReference type="ChEBI" id="CHEBI:15378"/>
        <dbReference type="ChEBI" id="CHEBI:16526"/>
        <dbReference type="ChEBI" id="CHEBI:57287"/>
        <dbReference type="ChEBI" id="CHEBI:57384"/>
        <dbReference type="ChEBI" id="CHEBI:74306"/>
        <dbReference type="ChEBI" id="CHEBI:74311"/>
    </reaction>
    <physiologicalReaction direction="left-to-right" evidence="1">
        <dbReference type="Rhea" id="RHEA:36964"/>
    </physiologicalReaction>
</comment>
<comment type="catalytic activity">
    <reaction evidence="1">
        <text>(10Z,13Z,16Z,19Z,22Z,25Z)-octacosahexaenoyl-CoA + malonyl-CoA + H(+) = 3-oxo-(12Z,15Z,18Z,21Z,24Z,27Z)-triacontahexaenoyl-CoA + CO2 + CoA</text>
        <dbReference type="Rhea" id="RHEA:36967"/>
        <dbReference type="ChEBI" id="CHEBI:15378"/>
        <dbReference type="ChEBI" id="CHEBI:16526"/>
        <dbReference type="ChEBI" id="CHEBI:57287"/>
        <dbReference type="ChEBI" id="CHEBI:57384"/>
        <dbReference type="ChEBI" id="CHEBI:74312"/>
        <dbReference type="ChEBI" id="CHEBI:74313"/>
    </reaction>
    <physiologicalReaction direction="left-to-right" evidence="1">
        <dbReference type="Rhea" id="RHEA:36968"/>
    </physiologicalReaction>
</comment>
<comment type="catalytic activity">
    <reaction evidence="1">
        <text>(12Z,15Z,18Z,21Z,24Z,27Z)-triacontahexaenoyl-CoA + malonyl-CoA + H(+) = 3-oxo-(14Z,17Z,20Z,23Z,26Z,29Z)-dotriacontahexaenoyl-CoA + CO2 + CoA</text>
        <dbReference type="Rhea" id="RHEA:36979"/>
        <dbReference type="ChEBI" id="CHEBI:15378"/>
        <dbReference type="ChEBI" id="CHEBI:16526"/>
        <dbReference type="ChEBI" id="CHEBI:57287"/>
        <dbReference type="ChEBI" id="CHEBI:57384"/>
        <dbReference type="ChEBI" id="CHEBI:74315"/>
        <dbReference type="ChEBI" id="CHEBI:74316"/>
    </reaction>
    <physiologicalReaction direction="left-to-right" evidence="1">
        <dbReference type="Rhea" id="RHEA:36980"/>
    </physiologicalReaction>
</comment>
<comment type="catalytic activity">
    <reaction evidence="1">
        <text>(14Z,17Z,20Z,23Z,26Z,29Z)-dotriacontahexaenoyl-CoA + malonyl-CoA + H(+) = 3-oxo-(16Z,19Z,22Z,25Z,28Z,31Z)-tetratriacontahexaenoyl-CoA + CO2 + CoA</text>
        <dbReference type="Rhea" id="RHEA:36983"/>
        <dbReference type="ChEBI" id="CHEBI:15378"/>
        <dbReference type="ChEBI" id="CHEBI:16526"/>
        <dbReference type="ChEBI" id="CHEBI:57287"/>
        <dbReference type="ChEBI" id="CHEBI:57384"/>
        <dbReference type="ChEBI" id="CHEBI:74317"/>
        <dbReference type="ChEBI" id="CHEBI:74318"/>
    </reaction>
    <physiologicalReaction direction="left-to-right" evidence="1">
        <dbReference type="Rhea" id="RHEA:36984"/>
    </physiologicalReaction>
</comment>
<comment type="catalytic activity">
    <reaction evidence="1">
        <text>(16Z,19Z,22Z,25Z,28Z,31Z)-tetratriacontahexaenoyl-CoA + malonyl-CoA + H(+) = 3-oxo-(18Z,21Z,24Z,27Z,30Z,33Z)-hexatriacontahexaenoyl-CoA + CO2 + CoA</text>
        <dbReference type="Rhea" id="RHEA:36995"/>
        <dbReference type="ChEBI" id="CHEBI:15378"/>
        <dbReference type="ChEBI" id="CHEBI:16526"/>
        <dbReference type="ChEBI" id="CHEBI:57287"/>
        <dbReference type="ChEBI" id="CHEBI:57384"/>
        <dbReference type="ChEBI" id="CHEBI:74319"/>
        <dbReference type="ChEBI" id="CHEBI:74320"/>
    </reaction>
    <physiologicalReaction direction="left-to-right" evidence="1">
        <dbReference type="Rhea" id="RHEA:36996"/>
    </physiologicalReaction>
</comment>
<comment type="catalytic activity">
    <reaction evidence="1">
        <text>(9Z,12Z,15Z,18Z,21Z)-tetracosapentaenoyl-CoA + malonyl-CoA + H(+) = 3-oxo-(11Z,14Z,17Z,20Z,23Z)-hexacosapentaenoyl-CoA + CO2 + CoA</text>
        <dbReference type="Rhea" id="RHEA:37243"/>
        <dbReference type="ChEBI" id="CHEBI:15378"/>
        <dbReference type="ChEBI" id="CHEBI:16526"/>
        <dbReference type="ChEBI" id="CHEBI:57287"/>
        <dbReference type="ChEBI" id="CHEBI:57384"/>
        <dbReference type="ChEBI" id="CHEBI:74083"/>
        <dbReference type="ChEBI" id="CHEBI:74663"/>
    </reaction>
    <physiologicalReaction direction="left-to-right" evidence="1">
        <dbReference type="Rhea" id="RHEA:37244"/>
    </physiologicalReaction>
</comment>
<comment type="pathway">
    <text evidence="2">Lipid metabolism; fatty acid biosynthesis.</text>
</comment>
<comment type="subunit">
    <text evidence="2">Oligomer.</text>
</comment>
<comment type="subcellular location">
    <subcellularLocation>
        <location evidence="2">Endoplasmic reticulum membrane</location>
        <topology evidence="2">Multi-pass membrane protein</topology>
    </subcellularLocation>
</comment>
<comment type="domain">
    <text evidence="2">The C-terminal di-lysine motif confers endoplasmic reticulum localization.</text>
</comment>
<comment type="PTM">
    <text evidence="1">N-glycosylated.</text>
</comment>
<comment type="similarity">
    <text evidence="2">Belongs to the ELO family. ELOVL4 subfamily.</text>
</comment>
<evidence type="ECO:0000250" key="1">
    <source>
        <dbReference type="UniProtKB" id="Q9EQC4"/>
    </source>
</evidence>
<evidence type="ECO:0000255" key="2">
    <source>
        <dbReference type="HAMAP-Rule" id="MF_03204"/>
    </source>
</evidence>
<evidence type="ECO:0000256" key="3">
    <source>
        <dbReference type="SAM" id="MobiDB-lite"/>
    </source>
</evidence>
<reference key="1">
    <citation type="journal article" date="2005" name="Exp. Eye Res.">
        <title>Mapping of a macular drusen susceptibility locus in rhesus macaques to the homologue of human chromosome 6q14-15.</title>
        <authorList>
            <person name="Singh K.K."/>
            <person name="Ristau S."/>
            <person name="Dawson W.W."/>
            <person name="Krawczak M."/>
            <person name="Schmidtke J."/>
        </authorList>
    </citation>
    <scope>NUCLEOTIDE SEQUENCE [GENOMIC DNA]</scope>
</reference>
<accession>Q3S8M4</accession>